<evidence type="ECO:0000256" key="1">
    <source>
        <dbReference type="SAM" id="MobiDB-lite"/>
    </source>
</evidence>
<evidence type="ECO:0000305" key="2"/>
<accession>Q23758</accession>
<organism>
    <name type="scientific">Clonorchis sinensis</name>
    <name type="common">Chinese liver fluke</name>
    <dbReference type="NCBI Taxonomy" id="79923"/>
    <lineage>
        <taxon>Eukaryota</taxon>
        <taxon>Metazoa</taxon>
        <taxon>Spiralia</taxon>
        <taxon>Lophotrochozoa</taxon>
        <taxon>Platyhelminthes</taxon>
        <taxon>Trematoda</taxon>
        <taxon>Digenea</taxon>
        <taxon>Opisthorchiida</taxon>
        <taxon>Opisthorchiata</taxon>
        <taxon>Opisthorchiidae</taxon>
        <taxon>Clonorchis</taxon>
    </lineage>
</organism>
<protein>
    <recommendedName>
        <fullName>Tropomyosin</fullName>
    </recommendedName>
</protein>
<proteinExistence type="evidence at transcript level"/>
<dbReference type="EMBL" id="L43918">
    <property type="protein sequence ID" value="AAA70373.1"/>
    <property type="molecule type" value="mRNA"/>
</dbReference>
<dbReference type="SMR" id="Q23758"/>
<dbReference type="FunFam" id="1.20.5.170:FF:000001">
    <property type="entry name" value="Tropomyosin alpha-1 chain isoform 1"/>
    <property type="match status" value="1"/>
</dbReference>
<dbReference type="FunFam" id="1.20.5.340:FF:000001">
    <property type="entry name" value="Tropomyosin alpha-1 chain isoform 2"/>
    <property type="match status" value="1"/>
</dbReference>
<dbReference type="Gene3D" id="1.20.5.170">
    <property type="match status" value="2"/>
</dbReference>
<dbReference type="Gene3D" id="1.20.5.340">
    <property type="match status" value="1"/>
</dbReference>
<dbReference type="InterPro" id="IPR000533">
    <property type="entry name" value="Tropomyosin"/>
</dbReference>
<dbReference type="PANTHER" id="PTHR19269">
    <property type="entry name" value="TROPOMYOSIN"/>
    <property type="match status" value="1"/>
</dbReference>
<dbReference type="Pfam" id="PF00261">
    <property type="entry name" value="Tropomyosin"/>
    <property type="match status" value="1"/>
</dbReference>
<dbReference type="PRINTS" id="PR00194">
    <property type="entry name" value="TROPOMYOSIN"/>
</dbReference>
<dbReference type="SUPFAM" id="SSF57997">
    <property type="entry name" value="Tropomyosin"/>
    <property type="match status" value="1"/>
</dbReference>
<feature type="chain" id="PRO_0000205651" description="Tropomyosin">
    <location>
        <begin position="1"/>
        <end position="284"/>
    </location>
</feature>
<feature type="region of interest" description="Disordered" evidence="1">
    <location>
        <begin position="29"/>
        <end position="49"/>
    </location>
</feature>
<feature type="region of interest" description="Disordered" evidence="1">
    <location>
        <begin position="111"/>
        <end position="149"/>
    </location>
</feature>
<feature type="coiled-coil region">
    <location>
        <begin position="1"/>
        <end position="284"/>
    </location>
</feature>
<feature type="compositionally biased region" description="Basic and acidic residues" evidence="1">
    <location>
        <begin position="29"/>
        <end position="42"/>
    </location>
</feature>
<feature type="compositionally biased region" description="Basic and acidic residues" evidence="1">
    <location>
        <begin position="111"/>
        <end position="136"/>
    </location>
</feature>
<keyword id="KW-0175">Coiled coil</keyword>
<keyword id="KW-0677">Repeat</keyword>
<reference key="1">
    <citation type="submission" date="1995-08" db="EMBL/GenBank/DDBJ databases">
        <title>Cloning, characterization and expression of Clonorchis sinensis tropomyosin cDNA.</title>
        <authorList>
            <person name="Hong S.-J."/>
            <person name="Seong Y.-K."/>
        </authorList>
    </citation>
    <scope>NUCLEOTIDE SEQUENCE [MRNA]</scope>
</reference>
<name>TPM_CLOSI</name>
<comment type="function">
    <text>Tropomyosin, in association with the troponin complex, plays a central role in the calcium dependent regulation of muscle contraction.</text>
</comment>
<comment type="domain">
    <text>The molecule is in a coiled coil structure that is formed by 2 polypeptide chains. The sequence exhibits a prominent seven-residues periodicity.</text>
</comment>
<comment type="similarity">
    <text evidence="2">Belongs to the tropomyosin family.</text>
</comment>
<sequence>MDGIKKKMIAMKLEKENAMERAVQYEAQLKQKEEEQEKKETEIGELNNRMKQAQTELDEIQEALQDSLNKMEETDKRATNAEAEVARMTRRIRLLEEDLEVSSSRLTETLAKFDEASKTAEESERGRKELEIRSIADDEGLSQLEDQQKEGKYIAEDADRKYDEAARKLAIVEVDFERAESRLEAAESKIVELEEELRVVGNNMKALEISEQESAQREESYEETIRDLTERLKAAEQRAAEAERQVSKLQNEVDHLEDDLLSEKIRYKDLSGGLDQTFAELTGY</sequence>